<dbReference type="EMBL" id="AE000520">
    <property type="protein sequence ID" value="AAC65228.1"/>
    <property type="molecule type" value="Genomic_DNA"/>
</dbReference>
<dbReference type="PIR" id="B71350">
    <property type="entry name" value="B71350"/>
</dbReference>
<dbReference type="RefSeq" id="WP_010881688.1">
    <property type="nucleotide sequence ID" value="NC_021490.2"/>
</dbReference>
<dbReference type="SMR" id="O83268"/>
<dbReference type="IntAct" id="O83268">
    <property type="interactions" value="2"/>
</dbReference>
<dbReference type="STRING" id="243276.TP_0240"/>
<dbReference type="EnsemblBacteria" id="AAC65228">
    <property type="protein sequence ID" value="AAC65228"/>
    <property type="gene ID" value="TP_0240"/>
</dbReference>
<dbReference type="GeneID" id="93876032"/>
<dbReference type="KEGG" id="tpa:TP_0240"/>
<dbReference type="KEGG" id="tpw:TPANIC_0240"/>
<dbReference type="eggNOG" id="COG0222">
    <property type="taxonomic scope" value="Bacteria"/>
</dbReference>
<dbReference type="HOGENOM" id="CLU_086499_3_0_12"/>
<dbReference type="OrthoDB" id="9811748at2"/>
<dbReference type="Proteomes" id="UP000000811">
    <property type="component" value="Chromosome"/>
</dbReference>
<dbReference type="GO" id="GO:0022625">
    <property type="term" value="C:cytosolic large ribosomal subunit"/>
    <property type="evidence" value="ECO:0007669"/>
    <property type="project" value="TreeGrafter"/>
</dbReference>
<dbReference type="GO" id="GO:0003729">
    <property type="term" value="F:mRNA binding"/>
    <property type="evidence" value="ECO:0007669"/>
    <property type="project" value="TreeGrafter"/>
</dbReference>
<dbReference type="GO" id="GO:0003735">
    <property type="term" value="F:structural constituent of ribosome"/>
    <property type="evidence" value="ECO:0007669"/>
    <property type="project" value="InterPro"/>
</dbReference>
<dbReference type="GO" id="GO:0006412">
    <property type="term" value="P:translation"/>
    <property type="evidence" value="ECO:0007669"/>
    <property type="project" value="UniProtKB-UniRule"/>
</dbReference>
<dbReference type="CDD" id="cd00387">
    <property type="entry name" value="Ribosomal_L7_L12"/>
    <property type="match status" value="1"/>
</dbReference>
<dbReference type="FunFam" id="3.30.1390.10:FF:000001">
    <property type="entry name" value="50S ribosomal protein L7/L12"/>
    <property type="match status" value="1"/>
</dbReference>
<dbReference type="Gene3D" id="3.30.1390.10">
    <property type="match status" value="1"/>
</dbReference>
<dbReference type="Gene3D" id="1.20.5.710">
    <property type="entry name" value="Single helix bin"/>
    <property type="match status" value="1"/>
</dbReference>
<dbReference type="HAMAP" id="MF_00368">
    <property type="entry name" value="Ribosomal_bL12"/>
    <property type="match status" value="1"/>
</dbReference>
<dbReference type="InterPro" id="IPR000206">
    <property type="entry name" value="Ribosomal_bL12"/>
</dbReference>
<dbReference type="InterPro" id="IPR013823">
    <property type="entry name" value="Ribosomal_bL12_C"/>
</dbReference>
<dbReference type="InterPro" id="IPR014719">
    <property type="entry name" value="Ribosomal_bL12_C/ClpS-like"/>
</dbReference>
<dbReference type="InterPro" id="IPR008932">
    <property type="entry name" value="Ribosomal_bL12_oligo"/>
</dbReference>
<dbReference type="InterPro" id="IPR036235">
    <property type="entry name" value="Ribosomal_bL12_oligo_N_sf"/>
</dbReference>
<dbReference type="NCBIfam" id="TIGR00855">
    <property type="entry name" value="L12"/>
    <property type="match status" value="1"/>
</dbReference>
<dbReference type="PANTHER" id="PTHR45987">
    <property type="entry name" value="39S RIBOSOMAL PROTEIN L12"/>
    <property type="match status" value="1"/>
</dbReference>
<dbReference type="PANTHER" id="PTHR45987:SF4">
    <property type="entry name" value="LARGE RIBOSOMAL SUBUNIT PROTEIN BL12M"/>
    <property type="match status" value="1"/>
</dbReference>
<dbReference type="Pfam" id="PF00542">
    <property type="entry name" value="Ribosomal_L12"/>
    <property type="match status" value="1"/>
</dbReference>
<dbReference type="Pfam" id="PF16320">
    <property type="entry name" value="Ribosomal_L12_N"/>
    <property type="match status" value="1"/>
</dbReference>
<dbReference type="SUPFAM" id="SSF54736">
    <property type="entry name" value="ClpS-like"/>
    <property type="match status" value="1"/>
</dbReference>
<dbReference type="SUPFAM" id="SSF48300">
    <property type="entry name" value="Ribosomal protein L7/12, oligomerisation (N-terminal) domain"/>
    <property type="match status" value="1"/>
</dbReference>
<keyword id="KW-1185">Reference proteome</keyword>
<keyword id="KW-0687">Ribonucleoprotein</keyword>
<keyword id="KW-0689">Ribosomal protein</keyword>
<gene>
    <name evidence="1" type="primary">rplL</name>
    <name type="ordered locus">TP_0240</name>
</gene>
<sequence length="129" mass="13338">MAALSNEQIIEAIRGKTILELSELIKAVEEEFGVTAAVPVAPVAEGGGAGSVAAEEQTEFTVVLKGLAEPGKKIAVIKEVRNVISGLGLKEAKDLVEGAPKTLKENVSKEEAAKIKESMTAAGALIEIS</sequence>
<protein>
    <recommendedName>
        <fullName evidence="1">Large ribosomal subunit protein bL12</fullName>
    </recommendedName>
    <alternativeName>
        <fullName evidence="2">50S ribosomal protein L7/L12</fullName>
    </alternativeName>
</protein>
<proteinExistence type="inferred from homology"/>
<accession>O83268</accession>
<comment type="function">
    <text evidence="1">Forms part of the ribosomal stalk which helps the ribosome interact with GTP-bound translation factors. Is thus essential for accurate translation.</text>
</comment>
<comment type="subunit">
    <text evidence="1">Homodimer. Part of the ribosomal stalk of the 50S ribosomal subunit. Forms a multimeric L10(L12)X complex, where L10 forms an elongated spine to which 2 to 4 L12 dimers bind in a sequential fashion. Binds GTP-bound translation factors.</text>
</comment>
<comment type="similarity">
    <text evidence="1">Belongs to the bacterial ribosomal protein bL12 family.</text>
</comment>
<name>RL7_TREPA</name>
<feature type="chain" id="PRO_0000157599" description="Large ribosomal subunit protein bL12">
    <location>
        <begin position="1"/>
        <end position="129"/>
    </location>
</feature>
<reference key="1">
    <citation type="journal article" date="1998" name="Science">
        <title>Complete genome sequence of Treponema pallidum, the syphilis spirochete.</title>
        <authorList>
            <person name="Fraser C.M."/>
            <person name="Norris S.J."/>
            <person name="Weinstock G.M."/>
            <person name="White O."/>
            <person name="Sutton G.G."/>
            <person name="Dodson R.J."/>
            <person name="Gwinn M.L."/>
            <person name="Hickey E.K."/>
            <person name="Clayton R.A."/>
            <person name="Ketchum K.A."/>
            <person name="Sodergren E."/>
            <person name="Hardham J.M."/>
            <person name="McLeod M.P."/>
            <person name="Salzberg S.L."/>
            <person name="Peterson J.D."/>
            <person name="Khalak H.G."/>
            <person name="Richardson D.L."/>
            <person name="Howell J.K."/>
            <person name="Chidambaram M."/>
            <person name="Utterback T.R."/>
            <person name="McDonald L.A."/>
            <person name="Artiach P."/>
            <person name="Bowman C."/>
            <person name="Cotton M.D."/>
            <person name="Fujii C."/>
            <person name="Garland S.A."/>
            <person name="Hatch B."/>
            <person name="Horst K."/>
            <person name="Roberts K.M."/>
            <person name="Sandusky M."/>
            <person name="Weidman J.F."/>
            <person name="Smith H.O."/>
            <person name="Venter J.C."/>
        </authorList>
    </citation>
    <scope>NUCLEOTIDE SEQUENCE [LARGE SCALE GENOMIC DNA]</scope>
    <source>
        <strain>Nichols</strain>
    </source>
</reference>
<organism>
    <name type="scientific">Treponema pallidum (strain Nichols)</name>
    <dbReference type="NCBI Taxonomy" id="243276"/>
    <lineage>
        <taxon>Bacteria</taxon>
        <taxon>Pseudomonadati</taxon>
        <taxon>Spirochaetota</taxon>
        <taxon>Spirochaetia</taxon>
        <taxon>Spirochaetales</taxon>
        <taxon>Treponemataceae</taxon>
        <taxon>Treponema</taxon>
    </lineage>
</organism>
<evidence type="ECO:0000255" key="1">
    <source>
        <dbReference type="HAMAP-Rule" id="MF_00368"/>
    </source>
</evidence>
<evidence type="ECO:0000305" key="2"/>